<evidence type="ECO:0000250" key="1"/>
<evidence type="ECO:0000255" key="2">
    <source>
        <dbReference type="PROSITE-ProRule" id="PRU01040"/>
    </source>
</evidence>
<evidence type="ECO:0000256" key="3">
    <source>
        <dbReference type="SAM" id="MobiDB-lite"/>
    </source>
</evidence>
<evidence type="ECO:0000305" key="4"/>
<protein>
    <recommendedName>
        <fullName>Zinc finger RNA-binding protein</fullName>
    </recommendedName>
</protein>
<feature type="chain" id="PRO_0000312724" description="Zinc finger RNA-binding protein">
    <location>
        <begin position="1"/>
        <end position="1054"/>
    </location>
</feature>
<feature type="domain" description="DZF" evidence="2">
    <location>
        <begin position="683"/>
        <end position="1053"/>
    </location>
</feature>
<feature type="region of interest" description="Disordered" evidence="3">
    <location>
        <begin position="342"/>
        <end position="366"/>
    </location>
</feature>
<feature type="region of interest" description="Disordered" evidence="3">
    <location>
        <begin position="491"/>
        <end position="517"/>
    </location>
</feature>
<feature type="region of interest" description="Disordered" evidence="3">
    <location>
        <begin position="657"/>
        <end position="702"/>
    </location>
</feature>
<feature type="region of interest" description="Disordered" evidence="3">
    <location>
        <begin position="741"/>
        <end position="761"/>
    </location>
</feature>
<feature type="region of interest" description="Disordered" evidence="3">
    <location>
        <begin position="1023"/>
        <end position="1054"/>
    </location>
</feature>
<feature type="compositionally biased region" description="Polar residues" evidence="3">
    <location>
        <begin position="355"/>
        <end position="366"/>
    </location>
</feature>
<feature type="compositionally biased region" description="Basic and acidic residues" evidence="3">
    <location>
        <begin position="744"/>
        <end position="761"/>
    </location>
</feature>
<feature type="compositionally biased region" description="Basic and acidic residues" evidence="3">
    <location>
        <begin position="1042"/>
        <end position="1054"/>
    </location>
</feature>
<feature type="sequence conflict" description="In Ref. 1; AAH42260." evidence="4" ref="1">
    <original>M</original>
    <variation>L</variation>
    <location>
        <position position="460"/>
    </location>
</feature>
<proteinExistence type="evidence at transcript level"/>
<keyword id="KW-0963">Cytoplasm</keyword>
<keyword id="KW-0217">Developmental protein</keyword>
<keyword id="KW-0238">DNA-binding</keyword>
<keyword id="KW-0539">Nucleus</keyword>
<keyword id="KW-1185">Reference proteome</keyword>
<keyword id="KW-0677">Repeat</keyword>
<keyword id="KW-0694">RNA-binding</keyword>
<sequence>MIPICPVVSFTYVPSRLGEEAKMATGNYFGFTHGAAAQYSQQPASGVAYSHPTTVASYTVHQAPVAPHTVTAAYAPAVATVAVARPAPVAMAATAAAYGGYPAAHTATDYGYTQRQQEAPPPPPPVTTQNYQDSYSYVRSTAPAVAYDSKQYYQQPTATAAAVAAQPQPSIAETYYQTVAPKAGYSQGAAQYTQAQQTRQVTAIKPANPSPASTTFSIYPVSSSVQPVAAAASVVPSYTQSATYSNTAVTYSGAAYSGYEAAVYSAASSYYQQQQQQQQKQAAAAAAAAATAAWTGTNFTKKAPFQNKQLKPKQPPKPPQIHYCDVCKISCAGPQTYKEHLEGQKHKKKEAALKASQNTTSSSTAVRGTQNQLRCELCDVSCTGADAYAAHIRGAKHQKVVKLHTKLGKPIPSTEPNVVSQSVTSAVSKASATSSSTSSANGSSSVASPAVKLLTSSSSMSTSNSSKVSSISSTSIVKKVTTPKITFIGGNKLQSTGNKVDDSKMSDISKATPSSAAQTQEVKIDPMSEAAQTLAALQSDVQPVGHDYVEEVRNDEGKVIRFHCKLCECSFNDPNAKEMHLKGRRHRLQYKKKVNPDLQVEVKPSIRARKIQEEKMRKQMQKEEYWRRREEEDQWRMEMRRYEEDMYWRRMEEEQHHWDDRRRVPEGGYPHGPPGPPGLLGVRPGMPPQPQGPAPLRRPDSSDDRYVMTKHAAIYPTEDELQAVQKIVSLTERALKLVSDSMTDQDKTKTKESDEKKEPTKERALKGVLRVGVLAKGLLLRGDRNVNLVLLCSEKPTRALLSCISESLPTQLAVICPEKFEVTSSIPEAAIILNSCVEPKMQVTITLTSPVIREETPRDGDVTPGMVKDPPDVLDRQKCLDALASLRHAKWFQARANGLQSCVIVIRILRDLCQRVPTWSDFPNWALELLVEKAISSSSGPQSPGDALRRVFECISSGIILKGGPGLLDPCEKDPYDTLATMNDQQREDITSSAQFALRLLAFRQIYKVLGMDPLSQTNQRFNVHSNRKRRRDSDSVDSFEAEGKKDKKDYENF</sequence>
<accession>Q6GPM1</accession>
<accession>Q8AVI6</accession>
<organism>
    <name type="scientific">Xenopus laevis</name>
    <name type="common">African clawed frog</name>
    <dbReference type="NCBI Taxonomy" id="8355"/>
    <lineage>
        <taxon>Eukaryota</taxon>
        <taxon>Metazoa</taxon>
        <taxon>Chordata</taxon>
        <taxon>Craniata</taxon>
        <taxon>Vertebrata</taxon>
        <taxon>Euteleostomi</taxon>
        <taxon>Amphibia</taxon>
        <taxon>Batrachia</taxon>
        <taxon>Anura</taxon>
        <taxon>Pipoidea</taxon>
        <taxon>Pipidae</taxon>
        <taxon>Xenopodinae</taxon>
        <taxon>Xenopus</taxon>
        <taxon>Xenopus</taxon>
    </lineage>
</organism>
<comment type="function">
    <text evidence="1">Involved in postimplantation and gastrulation stages of development. Binds to DNA and RNA (By similarity).</text>
</comment>
<comment type="subcellular location">
    <subcellularLocation>
        <location>Nucleus</location>
    </subcellularLocation>
    <subcellularLocation>
        <location evidence="1">Cytoplasm</location>
    </subcellularLocation>
</comment>
<comment type="sequence caution" evidence="4">
    <conflict type="erroneous initiation">
        <sequence resource="EMBL-CDS" id="AAH42260"/>
    </conflict>
    <text>Truncated N-terminus.</text>
</comment>
<comment type="sequence caution" evidence="4">
    <conflict type="miscellaneous discrepancy">
        <sequence resource="EMBL-CDS" id="AAH42260"/>
    </conflict>
    <text>Contaminating sequence. Potential poly-A sequence.</text>
</comment>
<name>ZFR_XENLA</name>
<dbReference type="EMBL" id="BC042260">
    <property type="protein sequence ID" value="AAH42260.1"/>
    <property type="status" value="ALT_SEQ"/>
    <property type="molecule type" value="mRNA"/>
</dbReference>
<dbReference type="EMBL" id="BC073093">
    <property type="protein sequence ID" value="AAH73093.1"/>
    <property type="molecule type" value="mRNA"/>
</dbReference>
<dbReference type="RefSeq" id="NP_001083976.1">
    <property type="nucleotide sequence ID" value="NM_001090507.1"/>
</dbReference>
<dbReference type="SMR" id="Q6GPM1"/>
<dbReference type="DNASU" id="399224"/>
<dbReference type="GeneID" id="399224"/>
<dbReference type="KEGG" id="xla:399224"/>
<dbReference type="AGR" id="Xenbase:XB-GENE-6067516"/>
<dbReference type="CTD" id="399224"/>
<dbReference type="Xenbase" id="XB-GENE-6067516">
    <property type="gene designation" value="zfr.S"/>
</dbReference>
<dbReference type="OMA" id="HDYVEEX"/>
<dbReference type="OrthoDB" id="8898434at2759"/>
<dbReference type="Proteomes" id="UP000186698">
    <property type="component" value="Chromosome 1S"/>
</dbReference>
<dbReference type="Bgee" id="399224">
    <property type="expression patterns" value="Expressed in neurula embryo and 19 other cell types or tissues"/>
</dbReference>
<dbReference type="GO" id="GO:0005737">
    <property type="term" value="C:cytoplasm"/>
    <property type="evidence" value="ECO:0007669"/>
    <property type="project" value="UniProtKB-SubCell"/>
</dbReference>
<dbReference type="GO" id="GO:0071011">
    <property type="term" value="C:precatalytic spliceosome"/>
    <property type="evidence" value="ECO:0007669"/>
    <property type="project" value="TreeGrafter"/>
</dbReference>
<dbReference type="GO" id="GO:0003677">
    <property type="term" value="F:DNA binding"/>
    <property type="evidence" value="ECO:0007669"/>
    <property type="project" value="UniProtKB-KW"/>
</dbReference>
<dbReference type="GO" id="GO:0003725">
    <property type="term" value="F:double-stranded RNA binding"/>
    <property type="evidence" value="ECO:0000318"/>
    <property type="project" value="GO_Central"/>
</dbReference>
<dbReference type="GO" id="GO:0003727">
    <property type="term" value="F:single-stranded RNA binding"/>
    <property type="evidence" value="ECO:0000318"/>
    <property type="project" value="GO_Central"/>
</dbReference>
<dbReference type="GO" id="GO:0008270">
    <property type="term" value="F:zinc ion binding"/>
    <property type="evidence" value="ECO:0007669"/>
    <property type="project" value="InterPro"/>
</dbReference>
<dbReference type="FunFam" id="1.10.1410.40:FF:000001">
    <property type="entry name" value="interleukin enhancer-binding factor 3 isoform X1"/>
    <property type="match status" value="1"/>
</dbReference>
<dbReference type="FunFam" id="3.30.160.60:FF:000153">
    <property type="entry name" value="Zinc finger RNA-binding protein 2"/>
    <property type="match status" value="1"/>
</dbReference>
<dbReference type="FunFam" id="3.30.160.60:FF:000210">
    <property type="entry name" value="Zinc finger RNA-binding protein 2"/>
    <property type="match status" value="1"/>
</dbReference>
<dbReference type="FunFam" id="3.30.160.60:FF:000439">
    <property type="entry name" value="Zinc finger RNA-binding protein 2"/>
    <property type="match status" value="1"/>
</dbReference>
<dbReference type="FunFam" id="3.30.460.10:FF:000010">
    <property type="entry name" value="Zinc finger RNA-binding protein 2"/>
    <property type="match status" value="1"/>
</dbReference>
<dbReference type="Gene3D" id="1.10.1410.40">
    <property type="match status" value="1"/>
</dbReference>
<dbReference type="Gene3D" id="3.30.460.10">
    <property type="entry name" value="Beta Polymerase, domain 2"/>
    <property type="match status" value="1"/>
</dbReference>
<dbReference type="Gene3D" id="3.30.160.60">
    <property type="entry name" value="Classic Zinc Finger"/>
    <property type="match status" value="3"/>
</dbReference>
<dbReference type="InterPro" id="IPR006561">
    <property type="entry name" value="DZF_dom"/>
</dbReference>
<dbReference type="InterPro" id="IPR049402">
    <property type="entry name" value="DZF_dom_C"/>
</dbReference>
<dbReference type="InterPro" id="IPR049401">
    <property type="entry name" value="DZF_dom_N"/>
</dbReference>
<dbReference type="InterPro" id="IPR003604">
    <property type="entry name" value="Matrin/U1-like-C_Znf_C2H2"/>
</dbReference>
<dbReference type="InterPro" id="IPR043519">
    <property type="entry name" value="NT_sf"/>
</dbReference>
<dbReference type="InterPro" id="IPR036236">
    <property type="entry name" value="Znf_C2H2_sf"/>
</dbReference>
<dbReference type="InterPro" id="IPR013087">
    <property type="entry name" value="Znf_C2H2_type"/>
</dbReference>
<dbReference type="PANTHER" id="PTHR45762">
    <property type="entry name" value="ZINC FINGER RNA-BINDING PROTEIN"/>
    <property type="match status" value="1"/>
</dbReference>
<dbReference type="PANTHER" id="PTHR45762:SF21">
    <property type="entry name" value="ZINC FINGER RNA-BINDING PROTEIN"/>
    <property type="match status" value="1"/>
</dbReference>
<dbReference type="Pfam" id="PF20965">
    <property type="entry name" value="DZF_C"/>
    <property type="match status" value="1"/>
</dbReference>
<dbReference type="Pfam" id="PF07528">
    <property type="entry name" value="DZF_N"/>
    <property type="match status" value="1"/>
</dbReference>
<dbReference type="Pfam" id="PF12874">
    <property type="entry name" value="zf-met"/>
    <property type="match status" value="3"/>
</dbReference>
<dbReference type="SMART" id="SM00572">
    <property type="entry name" value="DZF"/>
    <property type="match status" value="1"/>
</dbReference>
<dbReference type="SMART" id="SM00355">
    <property type="entry name" value="ZnF_C2H2"/>
    <property type="match status" value="3"/>
</dbReference>
<dbReference type="SMART" id="SM00451">
    <property type="entry name" value="ZnF_U1"/>
    <property type="match status" value="3"/>
</dbReference>
<dbReference type="SUPFAM" id="SSF57667">
    <property type="entry name" value="beta-beta-alpha zinc fingers"/>
    <property type="match status" value="3"/>
</dbReference>
<dbReference type="PROSITE" id="PS51703">
    <property type="entry name" value="DZF"/>
    <property type="match status" value="1"/>
</dbReference>
<dbReference type="PROSITE" id="PS00028">
    <property type="entry name" value="ZINC_FINGER_C2H2_1"/>
    <property type="match status" value="3"/>
</dbReference>
<reference key="1">
    <citation type="submission" date="2004-06" db="EMBL/GenBank/DDBJ databases">
        <authorList>
            <consortium name="NIH - Xenopus Gene Collection (XGC) project"/>
        </authorList>
    </citation>
    <scope>NUCLEOTIDE SEQUENCE [LARGE SCALE MRNA]</scope>
    <source>
        <tissue>Embryo</tissue>
        <tissue>Oocyte</tissue>
    </source>
</reference>
<gene>
    <name type="primary">zfr</name>
</gene>